<organism>
    <name type="scientific">Campylobacter jejuni (strain RM1221)</name>
    <dbReference type="NCBI Taxonomy" id="195099"/>
    <lineage>
        <taxon>Bacteria</taxon>
        <taxon>Pseudomonadati</taxon>
        <taxon>Campylobacterota</taxon>
        <taxon>Epsilonproteobacteria</taxon>
        <taxon>Campylobacterales</taxon>
        <taxon>Campylobacteraceae</taxon>
        <taxon>Campylobacter</taxon>
    </lineage>
</organism>
<protein>
    <recommendedName>
        <fullName evidence="1">Large ribosomal subunit protein bL36</fullName>
    </recommendedName>
    <alternativeName>
        <fullName evidence="2">50S ribosomal protein L36</fullName>
    </alternativeName>
</protein>
<reference key="1">
    <citation type="journal article" date="2005" name="PLoS Biol.">
        <title>Major structural differences and novel potential virulence mechanisms from the genomes of multiple Campylobacter species.</title>
        <authorList>
            <person name="Fouts D.E."/>
            <person name="Mongodin E.F."/>
            <person name="Mandrell R.E."/>
            <person name="Miller W.G."/>
            <person name="Rasko D.A."/>
            <person name="Ravel J."/>
            <person name="Brinkac L.M."/>
            <person name="DeBoy R.T."/>
            <person name="Parker C.T."/>
            <person name="Daugherty S.C."/>
            <person name="Dodson R.J."/>
            <person name="Durkin A.S."/>
            <person name="Madupu R."/>
            <person name="Sullivan S.A."/>
            <person name="Shetty J.U."/>
            <person name="Ayodeji M.A."/>
            <person name="Shvartsbeyn A."/>
            <person name="Schatz M.C."/>
            <person name="Badger J.H."/>
            <person name="Fraser C.M."/>
            <person name="Nelson K.E."/>
        </authorList>
    </citation>
    <scope>NUCLEOTIDE SEQUENCE [LARGE SCALE GENOMIC DNA]</scope>
    <source>
        <strain>RM1221</strain>
    </source>
</reference>
<feature type="chain" id="PRO_0000302175" description="Large ribosomal subunit protein bL36">
    <location>
        <begin position="1"/>
        <end position="37"/>
    </location>
</feature>
<gene>
    <name evidence="1" type="primary">rpmJ</name>
    <name type="ordered locus">CJE1763</name>
</gene>
<accession>Q5HSK0</accession>
<sequence length="37" mass="4364">MKVRPSVKKMCDKCKVVRRKGVVRIICENPKHKQRQG</sequence>
<comment type="similarity">
    <text evidence="1">Belongs to the bacterial ribosomal protein bL36 family.</text>
</comment>
<proteinExistence type="inferred from homology"/>
<name>RL36_CAMJR</name>
<evidence type="ECO:0000255" key="1">
    <source>
        <dbReference type="HAMAP-Rule" id="MF_00251"/>
    </source>
</evidence>
<evidence type="ECO:0000305" key="2"/>
<dbReference type="EMBL" id="CP000025">
    <property type="protein sequence ID" value="AAW36187.1"/>
    <property type="molecule type" value="Genomic_DNA"/>
</dbReference>
<dbReference type="RefSeq" id="WP_002781429.1">
    <property type="nucleotide sequence ID" value="NC_003912.7"/>
</dbReference>
<dbReference type="SMR" id="Q5HSK0"/>
<dbReference type="GeneID" id="98394726"/>
<dbReference type="KEGG" id="cjr:CJE1763"/>
<dbReference type="HOGENOM" id="CLU_135723_6_2_7"/>
<dbReference type="GO" id="GO:0005737">
    <property type="term" value="C:cytoplasm"/>
    <property type="evidence" value="ECO:0007669"/>
    <property type="project" value="UniProtKB-ARBA"/>
</dbReference>
<dbReference type="GO" id="GO:1990904">
    <property type="term" value="C:ribonucleoprotein complex"/>
    <property type="evidence" value="ECO:0007669"/>
    <property type="project" value="UniProtKB-KW"/>
</dbReference>
<dbReference type="GO" id="GO:0005840">
    <property type="term" value="C:ribosome"/>
    <property type="evidence" value="ECO:0007669"/>
    <property type="project" value="UniProtKB-KW"/>
</dbReference>
<dbReference type="GO" id="GO:0003735">
    <property type="term" value="F:structural constituent of ribosome"/>
    <property type="evidence" value="ECO:0007669"/>
    <property type="project" value="InterPro"/>
</dbReference>
<dbReference type="GO" id="GO:0006412">
    <property type="term" value="P:translation"/>
    <property type="evidence" value="ECO:0007669"/>
    <property type="project" value="UniProtKB-UniRule"/>
</dbReference>
<dbReference type="HAMAP" id="MF_00251">
    <property type="entry name" value="Ribosomal_bL36"/>
    <property type="match status" value="1"/>
</dbReference>
<dbReference type="InterPro" id="IPR000473">
    <property type="entry name" value="Ribosomal_bL36"/>
</dbReference>
<dbReference type="InterPro" id="IPR035977">
    <property type="entry name" value="Ribosomal_bL36_sp"/>
</dbReference>
<dbReference type="NCBIfam" id="TIGR01022">
    <property type="entry name" value="rpmJ_bact"/>
    <property type="match status" value="1"/>
</dbReference>
<dbReference type="PANTHER" id="PTHR42888">
    <property type="entry name" value="50S RIBOSOMAL PROTEIN L36, CHLOROPLASTIC"/>
    <property type="match status" value="1"/>
</dbReference>
<dbReference type="PANTHER" id="PTHR42888:SF1">
    <property type="entry name" value="LARGE RIBOSOMAL SUBUNIT PROTEIN BL36C"/>
    <property type="match status" value="1"/>
</dbReference>
<dbReference type="Pfam" id="PF00444">
    <property type="entry name" value="Ribosomal_L36"/>
    <property type="match status" value="1"/>
</dbReference>
<dbReference type="SUPFAM" id="SSF57840">
    <property type="entry name" value="Ribosomal protein L36"/>
    <property type="match status" value="1"/>
</dbReference>
<dbReference type="PROSITE" id="PS00828">
    <property type="entry name" value="RIBOSOMAL_L36"/>
    <property type="match status" value="1"/>
</dbReference>
<keyword id="KW-0687">Ribonucleoprotein</keyword>
<keyword id="KW-0689">Ribosomal protein</keyword>